<organism>
    <name type="scientific">Rickettsia rickettsii (strain Sheila Smith)</name>
    <dbReference type="NCBI Taxonomy" id="392021"/>
    <lineage>
        <taxon>Bacteria</taxon>
        <taxon>Pseudomonadati</taxon>
        <taxon>Pseudomonadota</taxon>
        <taxon>Alphaproteobacteria</taxon>
        <taxon>Rickettsiales</taxon>
        <taxon>Rickettsiaceae</taxon>
        <taxon>Rickettsieae</taxon>
        <taxon>Rickettsia</taxon>
        <taxon>spotted fever group</taxon>
    </lineage>
</organism>
<gene>
    <name evidence="1" type="primary">gatC</name>
    <name type="ordered locus">A1G_01105</name>
</gene>
<keyword id="KW-0067">ATP-binding</keyword>
<keyword id="KW-0436">Ligase</keyword>
<keyword id="KW-0547">Nucleotide-binding</keyword>
<keyword id="KW-0648">Protein biosynthesis</keyword>
<name>GATC_RICRS</name>
<protein>
    <recommendedName>
        <fullName evidence="1">Aspartyl/glutamyl-tRNA(Asn/Gln) amidotransferase subunit C</fullName>
        <shortName evidence="1">Asp/Glu-ADT subunit C</shortName>
        <ecNumber evidence="1">6.3.5.-</ecNumber>
    </recommendedName>
</protein>
<sequence>MITKEAAQKIAKLARLKFEEDTVEKFFTQLSTIMDMIDILNEIDCKDIEPLTSVCNMNARMREDAVTSSDLSSELFDNVSGNSTQLAKEVKYFITPKVVE</sequence>
<comment type="function">
    <text evidence="1">Allows the formation of correctly charged Asn-tRNA(Asn) or Gln-tRNA(Gln) through the transamidation of misacylated Asp-tRNA(Asn) or Glu-tRNA(Gln) in organisms which lack either or both of asparaginyl-tRNA or glutaminyl-tRNA synthetases. The reaction takes place in the presence of glutamine and ATP through an activated phospho-Asp-tRNA(Asn) or phospho-Glu-tRNA(Gln).</text>
</comment>
<comment type="catalytic activity">
    <reaction evidence="1">
        <text>L-glutamyl-tRNA(Gln) + L-glutamine + ATP + H2O = L-glutaminyl-tRNA(Gln) + L-glutamate + ADP + phosphate + H(+)</text>
        <dbReference type="Rhea" id="RHEA:17521"/>
        <dbReference type="Rhea" id="RHEA-COMP:9681"/>
        <dbReference type="Rhea" id="RHEA-COMP:9684"/>
        <dbReference type="ChEBI" id="CHEBI:15377"/>
        <dbReference type="ChEBI" id="CHEBI:15378"/>
        <dbReference type="ChEBI" id="CHEBI:29985"/>
        <dbReference type="ChEBI" id="CHEBI:30616"/>
        <dbReference type="ChEBI" id="CHEBI:43474"/>
        <dbReference type="ChEBI" id="CHEBI:58359"/>
        <dbReference type="ChEBI" id="CHEBI:78520"/>
        <dbReference type="ChEBI" id="CHEBI:78521"/>
        <dbReference type="ChEBI" id="CHEBI:456216"/>
    </reaction>
</comment>
<comment type="catalytic activity">
    <reaction evidence="1">
        <text>L-aspartyl-tRNA(Asn) + L-glutamine + ATP + H2O = L-asparaginyl-tRNA(Asn) + L-glutamate + ADP + phosphate + 2 H(+)</text>
        <dbReference type="Rhea" id="RHEA:14513"/>
        <dbReference type="Rhea" id="RHEA-COMP:9674"/>
        <dbReference type="Rhea" id="RHEA-COMP:9677"/>
        <dbReference type="ChEBI" id="CHEBI:15377"/>
        <dbReference type="ChEBI" id="CHEBI:15378"/>
        <dbReference type="ChEBI" id="CHEBI:29985"/>
        <dbReference type="ChEBI" id="CHEBI:30616"/>
        <dbReference type="ChEBI" id="CHEBI:43474"/>
        <dbReference type="ChEBI" id="CHEBI:58359"/>
        <dbReference type="ChEBI" id="CHEBI:78515"/>
        <dbReference type="ChEBI" id="CHEBI:78516"/>
        <dbReference type="ChEBI" id="CHEBI:456216"/>
    </reaction>
</comment>
<comment type="subunit">
    <text evidence="1">Heterotrimer of A, B and C subunits.</text>
</comment>
<comment type="similarity">
    <text evidence="1">Belongs to the GatC family.</text>
</comment>
<dbReference type="EC" id="6.3.5.-" evidence="1"/>
<dbReference type="EMBL" id="CP000848">
    <property type="protein sequence ID" value="ABV75803.1"/>
    <property type="molecule type" value="Genomic_DNA"/>
</dbReference>
<dbReference type="RefSeq" id="WP_012150410.1">
    <property type="nucleotide sequence ID" value="NZ_CP121767.1"/>
</dbReference>
<dbReference type="SMR" id="A8GQX8"/>
<dbReference type="GeneID" id="79936987"/>
<dbReference type="KEGG" id="rri:A1G_01105"/>
<dbReference type="HOGENOM" id="CLU_105899_2_0_5"/>
<dbReference type="Proteomes" id="UP000006832">
    <property type="component" value="Chromosome"/>
</dbReference>
<dbReference type="GO" id="GO:0050566">
    <property type="term" value="F:asparaginyl-tRNA synthase (glutamine-hydrolyzing) activity"/>
    <property type="evidence" value="ECO:0007669"/>
    <property type="project" value="RHEA"/>
</dbReference>
<dbReference type="GO" id="GO:0005524">
    <property type="term" value="F:ATP binding"/>
    <property type="evidence" value="ECO:0007669"/>
    <property type="project" value="UniProtKB-KW"/>
</dbReference>
<dbReference type="GO" id="GO:0050567">
    <property type="term" value="F:glutaminyl-tRNA synthase (glutamine-hydrolyzing) activity"/>
    <property type="evidence" value="ECO:0007669"/>
    <property type="project" value="UniProtKB-UniRule"/>
</dbReference>
<dbReference type="GO" id="GO:0070681">
    <property type="term" value="P:glutaminyl-tRNAGln biosynthesis via transamidation"/>
    <property type="evidence" value="ECO:0007669"/>
    <property type="project" value="TreeGrafter"/>
</dbReference>
<dbReference type="GO" id="GO:0006450">
    <property type="term" value="P:regulation of translational fidelity"/>
    <property type="evidence" value="ECO:0007669"/>
    <property type="project" value="InterPro"/>
</dbReference>
<dbReference type="GO" id="GO:0006412">
    <property type="term" value="P:translation"/>
    <property type="evidence" value="ECO:0007669"/>
    <property type="project" value="UniProtKB-UniRule"/>
</dbReference>
<dbReference type="Gene3D" id="1.10.20.60">
    <property type="entry name" value="Glu-tRNAGln amidotransferase C subunit, N-terminal domain"/>
    <property type="match status" value="1"/>
</dbReference>
<dbReference type="HAMAP" id="MF_00122">
    <property type="entry name" value="GatC"/>
    <property type="match status" value="1"/>
</dbReference>
<dbReference type="InterPro" id="IPR036113">
    <property type="entry name" value="Asp/Glu-ADT_sf_sub_c"/>
</dbReference>
<dbReference type="InterPro" id="IPR003837">
    <property type="entry name" value="GatC"/>
</dbReference>
<dbReference type="NCBIfam" id="TIGR00135">
    <property type="entry name" value="gatC"/>
    <property type="match status" value="1"/>
</dbReference>
<dbReference type="PANTHER" id="PTHR15004">
    <property type="entry name" value="GLUTAMYL-TRNA(GLN) AMIDOTRANSFERASE SUBUNIT C, MITOCHONDRIAL"/>
    <property type="match status" value="1"/>
</dbReference>
<dbReference type="PANTHER" id="PTHR15004:SF0">
    <property type="entry name" value="GLUTAMYL-TRNA(GLN) AMIDOTRANSFERASE SUBUNIT C, MITOCHONDRIAL"/>
    <property type="match status" value="1"/>
</dbReference>
<dbReference type="Pfam" id="PF02686">
    <property type="entry name" value="GatC"/>
    <property type="match status" value="1"/>
</dbReference>
<dbReference type="SUPFAM" id="SSF141000">
    <property type="entry name" value="Glu-tRNAGln amidotransferase C subunit"/>
    <property type="match status" value="1"/>
</dbReference>
<accession>A8GQX8</accession>
<reference key="1">
    <citation type="submission" date="2007-09" db="EMBL/GenBank/DDBJ databases">
        <title>Complete genome sequence of Rickettsia rickettsii.</title>
        <authorList>
            <person name="Madan A."/>
            <person name="Fahey J."/>
            <person name="Helton E."/>
            <person name="Ketteman M."/>
            <person name="Madan A."/>
            <person name="Rodrigues S."/>
            <person name="Sanchez A."/>
            <person name="Dasch G."/>
            <person name="Eremeeva M."/>
        </authorList>
    </citation>
    <scope>NUCLEOTIDE SEQUENCE [LARGE SCALE GENOMIC DNA]</scope>
    <source>
        <strain>Sheila Smith</strain>
    </source>
</reference>
<feature type="chain" id="PRO_1000016204" description="Aspartyl/glutamyl-tRNA(Asn/Gln) amidotransferase subunit C">
    <location>
        <begin position="1"/>
        <end position="100"/>
    </location>
</feature>
<proteinExistence type="inferred from homology"/>
<evidence type="ECO:0000255" key="1">
    <source>
        <dbReference type="HAMAP-Rule" id="MF_00122"/>
    </source>
</evidence>